<dbReference type="EC" id="3.2.2.-" evidence="4"/>
<dbReference type="EC" id="3.2.2.6" evidence="3"/>
<dbReference type="EMBL" id="JEWH01000055">
    <property type="protein sequence ID" value="EXB04249.1"/>
    <property type="molecule type" value="Genomic_DNA"/>
</dbReference>
<dbReference type="PDB" id="7UWG">
    <property type="method" value="X-ray"/>
    <property type="resolution" value="2.16 A"/>
    <property type="chains" value="A/B/C/D=134-267"/>
</dbReference>
<dbReference type="PDB" id="7UXU">
    <property type="method" value="EM"/>
    <property type="resolution" value="2.74 A"/>
    <property type="chains" value="A/B/C/D=134-267"/>
</dbReference>
<dbReference type="PDB" id="8G83">
    <property type="method" value="X-ray"/>
    <property type="resolution" value="3.03 A"/>
    <property type="chains" value="A/B=134-269"/>
</dbReference>
<dbReference type="PDBsum" id="7UWG"/>
<dbReference type="PDBsum" id="7UXU"/>
<dbReference type="PDBsum" id="8G83"/>
<dbReference type="SMR" id="A0A009IHW8"/>
<dbReference type="PATRIC" id="fig|1310613.3.peg.3172"/>
<dbReference type="Proteomes" id="UP000020595">
    <property type="component" value="Unassembled WGS sequence"/>
</dbReference>
<dbReference type="GO" id="GO:0003953">
    <property type="term" value="F:NAD+ nucleosidase activity"/>
    <property type="evidence" value="ECO:0000314"/>
    <property type="project" value="UniProtKB"/>
</dbReference>
<dbReference type="GO" id="GO:0061809">
    <property type="term" value="F:NAD+ nucleosidase activity, cyclic ADP-ribose generating"/>
    <property type="evidence" value="ECO:0007669"/>
    <property type="project" value="UniProtKB-EC"/>
</dbReference>
<dbReference type="GO" id="GO:0050135">
    <property type="term" value="F:NADP+ nucleosidase activity"/>
    <property type="evidence" value="ECO:0007669"/>
    <property type="project" value="RHEA"/>
</dbReference>
<dbReference type="GO" id="GO:0019677">
    <property type="term" value="P:NAD catabolic process"/>
    <property type="evidence" value="ECO:0000314"/>
    <property type="project" value="UniProtKB"/>
</dbReference>
<dbReference type="GO" id="GO:0007165">
    <property type="term" value="P:signal transduction"/>
    <property type="evidence" value="ECO:0007669"/>
    <property type="project" value="InterPro"/>
</dbReference>
<dbReference type="Gene3D" id="3.40.50.10140">
    <property type="entry name" value="Toll/interleukin-1 receptor homology (TIR) domain"/>
    <property type="match status" value="1"/>
</dbReference>
<dbReference type="InterPro" id="IPR000157">
    <property type="entry name" value="TIR_dom"/>
</dbReference>
<dbReference type="InterPro" id="IPR035897">
    <property type="entry name" value="Toll_tir_struct_dom_sf"/>
</dbReference>
<dbReference type="Pfam" id="PF13676">
    <property type="entry name" value="TIR_2"/>
    <property type="match status" value="1"/>
</dbReference>
<dbReference type="SMART" id="SM00255">
    <property type="entry name" value="TIR"/>
    <property type="match status" value="1"/>
</dbReference>
<dbReference type="SUPFAM" id="SSF52200">
    <property type="entry name" value="Toll/Interleukin receptor TIR domain"/>
    <property type="match status" value="1"/>
</dbReference>
<dbReference type="PROSITE" id="PS50104">
    <property type="entry name" value="TIR"/>
    <property type="match status" value="1"/>
</dbReference>
<sequence>MSLEQKKGADIISKILQIQNSIGKTTSPSTLKTKLSEISRKEQENARIQSKLSDLQKKKIDIDNKLLKEKQNLIKEEILERKKLEVLTKKQQKDEIEHQKKLKREIDAIKASTQYITDVSISSYNNTIPETEPEYDLFISHASEDKEDFVRPLAETLQQLGVNVWYDEFTLKVGDSLRQKIDSGLRNSKYGTVVLSTDFIKKDWTNYELDGLVAREMNGHKMILPIWHKITKNDVLDYSPNLADKVALNTSVNSIEEIAHQLADVILNR</sequence>
<accession>A0A009IHW8</accession>
<keyword id="KW-0002">3D-structure</keyword>
<keyword id="KW-0175">Coiled coil</keyword>
<keyword id="KW-0378">Hydrolase</keyword>
<keyword id="KW-0520">NAD</keyword>
<gene>
    <name evidence="8" type="ORF">J512_3302</name>
</gene>
<feature type="chain" id="PRO_0000449138" description="2' cyclic ADP-D-ribose synthase AbTIR">
    <location>
        <begin position="1"/>
        <end position="269"/>
    </location>
</feature>
<feature type="domain" description="TIR" evidence="2 4">
    <location>
        <begin position="133"/>
        <end position="266"/>
    </location>
</feature>
<feature type="coiled-coil region" evidence="1">
    <location>
        <begin position="31"/>
        <end position="99"/>
    </location>
</feature>
<feature type="active site" evidence="2">
    <location>
        <position position="208"/>
    </location>
</feature>
<feature type="binding site" evidence="7 11">
    <location>
        <position position="143"/>
    </location>
    <ligand>
        <name>NAD(+)</name>
        <dbReference type="ChEBI" id="CHEBI:57540"/>
    </ligand>
</feature>
<feature type="binding site" evidence="2">
    <location>
        <position position="172"/>
    </location>
    <ligand>
        <name>NAD(+)</name>
        <dbReference type="ChEBI" id="CHEBI:57540"/>
    </ligand>
</feature>
<feature type="binding site" evidence="7 11">
    <location>
        <position position="202"/>
    </location>
    <ligand>
        <name>NAD(+)</name>
        <dbReference type="ChEBI" id="CHEBI:57540"/>
    </ligand>
</feature>
<feature type="binding site" evidence="7 11">
    <location>
        <position position="245"/>
    </location>
    <ligand>
        <name>NAD(+)</name>
        <dbReference type="ChEBI" id="CHEBI:57540"/>
    </ligand>
</feature>
<feature type="site" description="Important for ADPR cyclization" evidence="4">
    <location>
        <position position="204"/>
    </location>
</feature>
<feature type="mutagenesis site" description="Loss of NADase activity." evidence="4">
    <original>G</original>
    <variation>A</variation>
    <location>
        <position position="174"/>
    </location>
</feature>
<feature type="mutagenesis site" description="2.5-fold increased NADase activity." evidence="4">
    <original>D</original>
    <variation>A</variation>
    <location>
        <position position="175"/>
    </location>
</feature>
<feature type="mutagenesis site" description="Loss of NADase activity." evidence="4">
    <original>S</original>
    <variation>A</variation>
    <location>
        <position position="176"/>
    </location>
</feature>
<feature type="mutagenesis site" description="2-fold increased NADase activity." evidence="4">
    <original>L</original>
    <variation>A</variation>
    <location>
        <position position="177"/>
    </location>
</feature>
<feature type="mutagenesis site" description="Loss of NADase activity." evidence="4">
    <original>R</original>
    <variation>A</variation>
    <location>
        <position position="178"/>
    </location>
</feature>
<feature type="mutagenesis site" description="Slowed NADase activity." evidence="4">
    <original>D</original>
    <variation>A</variation>
    <location>
        <position position="182"/>
    </location>
</feature>
<feature type="mutagenesis site" description="Decreased NADase activity, makes about 10% 2'cADPR, 4-fold increased production of ADPR." evidence="4">
    <original>W</original>
    <variation>A</variation>
    <location>
        <position position="204"/>
    </location>
</feature>
<feature type="mutagenesis site" description="Decreased NADase activity, makes about 40% 2'cADPR, 2-fold increased production of ADPR." evidence="4">
    <original>W</original>
    <variation>F</variation>
    <location>
        <position position="204"/>
    </location>
</feature>
<feature type="mutagenesis site" description="Decreased NADase activity, makes no 2'cADPR, wild-type levels of ADPR." evidence="4">
    <original>W</original>
    <variation>Y</variation>
    <location>
        <position position="204"/>
    </location>
</feature>
<feature type="mutagenesis site" description="Slowed NADase activity." evidence="4">
    <original>T</original>
    <variation>A</variation>
    <location>
        <position position="205"/>
    </location>
</feature>
<feature type="mutagenesis site" description="Loss of NADase activity." evidence="4">
    <original>N</original>
    <variation>A</variation>
    <location>
        <position position="206"/>
    </location>
</feature>
<feature type="mutagenesis site" description="Loss of NADase activity." evidence="4">
    <original>Y</original>
    <variation>A</variation>
    <location>
        <position position="207"/>
    </location>
</feature>
<feature type="mutagenesis site" description="Loss of NADase activity." evidence="4">
    <original>E</original>
    <variation>A</variation>
    <location>
        <position position="208"/>
    </location>
</feature>
<feature type="mutagenesis site" description="Slowed NADase activity, decreased production of 2'cADPR, no production of ADPR." evidence="4">
    <original>E</original>
    <variation>D</variation>
    <location>
        <position position="208"/>
    </location>
</feature>
<feature type="mutagenesis site" description="Loss of NADase activity." evidence="4">
    <original>R</original>
    <variation>A</variation>
    <location>
        <position position="215"/>
    </location>
</feature>
<feature type="mutagenesis site" description="2-fold increased NADase activity." evidence="4">
    <original>E</original>
    <variation>A</variation>
    <location>
        <position position="216"/>
    </location>
</feature>
<feature type="strand" evidence="12">
    <location>
        <begin position="135"/>
        <end position="142"/>
    </location>
</feature>
<feature type="helix" evidence="12">
    <location>
        <begin position="143"/>
        <end position="145"/>
    </location>
</feature>
<feature type="turn" evidence="12">
    <location>
        <begin position="146"/>
        <end position="149"/>
    </location>
</feature>
<feature type="helix" evidence="12">
    <location>
        <begin position="150"/>
        <end position="159"/>
    </location>
</feature>
<feature type="helix" evidence="12">
    <location>
        <begin position="167"/>
        <end position="169"/>
    </location>
</feature>
<feature type="helix" evidence="12">
    <location>
        <begin position="177"/>
        <end position="187"/>
    </location>
</feature>
<feature type="strand" evidence="12">
    <location>
        <begin position="188"/>
        <end position="195"/>
    </location>
</feature>
<feature type="helix" evidence="12">
    <location>
        <begin position="197"/>
        <end position="202"/>
    </location>
</feature>
<feature type="helix" evidence="12">
    <location>
        <begin position="206"/>
        <end position="208"/>
    </location>
</feature>
<feature type="helix" evidence="12">
    <location>
        <begin position="209"/>
        <end position="212"/>
    </location>
</feature>
<feature type="turn" evidence="13">
    <location>
        <begin position="217"/>
        <end position="219"/>
    </location>
</feature>
<feature type="strand" evidence="12">
    <location>
        <begin position="220"/>
        <end position="222"/>
    </location>
</feature>
<feature type="strand" evidence="13">
    <location>
        <begin position="223"/>
        <end position="227"/>
    </location>
</feature>
<feature type="helix" evidence="12">
    <location>
        <begin position="232"/>
        <end position="238"/>
    </location>
</feature>
<feature type="helix" evidence="12">
    <location>
        <begin position="240"/>
        <end position="245"/>
    </location>
</feature>
<feature type="turn" evidence="12">
    <location>
        <begin position="250"/>
        <end position="252"/>
    </location>
</feature>
<feature type="helix" evidence="12">
    <location>
        <begin position="255"/>
        <end position="266"/>
    </location>
</feature>
<name>ABTIR_ACIB9</name>
<comment type="function">
    <text evidence="3 4">NAD(+) hydrolase (NADase) that catalyzes cleavage of NAD(+) into ADP-D-ribose (ADPR) and nicotinamide (PubMed:29395922). In addition to ADPR, also generates a cyclization variant of cyclic ADPR (cADPR), termed 2'cADPR (v-cADPR) (PubMed:29395922, PubMed:36048923). Cleaves NADP(+), but does not cyclize the product (PubMed:36048923).</text>
</comment>
<comment type="catalytic activity">
    <reaction evidence="4">
        <text>NAD(+) = 2'cADPR + nicotinamide + H(+)</text>
        <dbReference type="Rhea" id="RHEA:75299"/>
        <dbReference type="ChEBI" id="CHEBI:15378"/>
        <dbReference type="ChEBI" id="CHEBI:17154"/>
        <dbReference type="ChEBI" id="CHEBI:57540"/>
        <dbReference type="ChEBI" id="CHEBI:194248"/>
    </reaction>
    <physiologicalReaction direction="left-to-right" evidence="4">
        <dbReference type="Rhea" id="RHEA:75300"/>
    </physiologicalReaction>
</comment>
<comment type="catalytic activity">
    <reaction evidence="3 4">
        <text>NAD(+) + H2O = ADP-D-ribose + nicotinamide + H(+)</text>
        <dbReference type="Rhea" id="RHEA:16301"/>
        <dbReference type="ChEBI" id="CHEBI:15377"/>
        <dbReference type="ChEBI" id="CHEBI:15378"/>
        <dbReference type="ChEBI" id="CHEBI:17154"/>
        <dbReference type="ChEBI" id="CHEBI:57540"/>
        <dbReference type="ChEBI" id="CHEBI:57967"/>
        <dbReference type="EC" id="3.2.2.6"/>
    </reaction>
    <physiologicalReaction direction="left-to-right" evidence="3 4">
        <dbReference type="Rhea" id="RHEA:16302"/>
    </physiologicalReaction>
</comment>
<comment type="catalytic activity">
    <reaction evidence="4">
        <text>NADP(+) + H2O = ADP-D-ribose 2'-phosphate + nicotinamide + H(+)</text>
        <dbReference type="Rhea" id="RHEA:19849"/>
        <dbReference type="ChEBI" id="CHEBI:15377"/>
        <dbReference type="ChEBI" id="CHEBI:15378"/>
        <dbReference type="ChEBI" id="CHEBI:17154"/>
        <dbReference type="ChEBI" id="CHEBI:58349"/>
        <dbReference type="ChEBI" id="CHEBI:58673"/>
    </reaction>
    <physiologicalReaction direction="left-to-right" evidence="4">
        <dbReference type="Rhea" id="RHEA:19850"/>
    </physiologicalReaction>
</comment>
<comment type="subunit">
    <text evidence="4">Homodimer. In the presence of NAD(+) analog 8-amino-isoquinoline adenine dinucleotide (3AD) forms filaments with 3AD between monomers; conformational changes occur upon 3AD binding.</text>
</comment>
<comment type="domain">
    <text evidence="2 4 7">The TIR domain mediates NAD(+) hydrolase (NADase) activity. Self-association of TIR domains is required for NADase activity (Probable). The TIR domain alone is active and produces cADPR (residues 134-267) (PubMed:36048923).</text>
</comment>
<proteinExistence type="evidence at protein level"/>
<reference key="1">
    <citation type="submission" date="2014-02" db="EMBL/GenBank/DDBJ databases">
        <title>Comparative genomics and transcriptomics to identify genetic mechanisms underlying the emergence of carbapenem resistant Acinetobacter baumannii (CRAb).</title>
        <authorList>
            <person name="Harris A.D."/>
            <person name="Johnson K.J."/>
            <person name="George J."/>
            <person name="Shefchek K."/>
            <person name="Daugherty S.C."/>
            <person name="Parankush S."/>
            <person name="Sadzewicz L."/>
            <person name="Tallon L."/>
            <person name="Sengamalay N."/>
            <person name="Hazen T.H."/>
            <person name="Rasko D.A."/>
        </authorList>
    </citation>
    <scope>NUCLEOTIDE SEQUENCE [LARGE SCALE GENOMIC DNA]</scope>
    <source>
        <strain>1295743</strain>
    </source>
</reference>
<reference key="2">
    <citation type="journal article" date="2018" name="Curr. Biol.">
        <title>TIR domain proteins are an ancient family of NAD+-consuming enzymes.</title>
        <authorList>
            <person name="Essuman K."/>
            <person name="Summers D.W."/>
            <person name="Sasaki Y."/>
            <person name="Mao X."/>
            <person name="Yim A.K.Y."/>
            <person name="DiAntonio A."/>
            <person name="Milbrandt J."/>
        </authorList>
    </citation>
    <scope>FUNCTION</scope>
    <scope>CATALYTIC ACTIVITY</scope>
    <source>
        <strain>1295743</strain>
    </source>
</reference>
<reference evidence="9 10" key="3">
    <citation type="journal article" date="2022" name="Science">
        <title>Cyclic ADP ribose isomers: Production, chemical structures, and immune signaling.</title>
        <authorList>
            <person name="Manik M.K."/>
            <person name="Shi Y."/>
            <person name="Li S."/>
            <person name="Zaydman M.A."/>
            <person name="Damaraju N."/>
            <person name="Eastman S."/>
            <person name="Smith T.G."/>
            <person name="Gu W."/>
            <person name="Masic V."/>
            <person name="Mosaiab T."/>
            <person name="Weagley J.S."/>
            <person name="Hancock S.J."/>
            <person name="Vasquez E."/>
            <person name="Hartley-Tassell L."/>
            <person name="Kargios N."/>
            <person name="Maruta N."/>
            <person name="Lim B.Y.J."/>
            <person name="Burdett H."/>
            <person name="Landsberg M.J."/>
            <person name="Schembri M.A."/>
            <person name="Prokes I."/>
            <person name="Song L."/>
            <person name="Grant M."/>
            <person name="DiAntonio A."/>
            <person name="Nanson J.D."/>
            <person name="Guo M."/>
            <person name="Milbrandt J."/>
            <person name="Ve T."/>
            <person name="Kobe B."/>
        </authorList>
    </citation>
    <scope>X-RAY CRYSTALLOGRAPHY (2.16 ANGSTROMS) OF 134-267</scope>
    <scope>STRUCTURE BY ELECTRON MICROSCOPY (2.74 ANGSTROMS) OF 134-267 IN COMPLEX WITH 3AD</scope>
    <scope>FUNCTION</scope>
    <scope>CATALYTIC ACTIVITY</scope>
    <scope>SUBUNIT</scope>
    <scope>DOMAIN</scope>
    <scope>MUTAGENESIS OF GLY-174; ASP-175; SER-176; LEU-177; ARG-178; ASP-182; TRP-204; THR-205; ASN-206; TYR-207; GLU-208; ARG-215 AND GLU-216</scope>
    <source>
        <strain>1295743</strain>
    </source>
</reference>
<protein>
    <recommendedName>
        <fullName evidence="6">2' cyclic ADP-D-ribose synthase AbTIR</fullName>
        <shortName evidence="6">2'cADPR synthase AbTIR</shortName>
        <ecNumber evidence="4">3.2.2.-</ecNumber>
    </recommendedName>
    <alternativeName>
        <fullName evidence="6">NAD(+) hydrolase AbTIR</fullName>
        <ecNumber evidence="3">3.2.2.6</ecNumber>
    </alternativeName>
    <alternativeName>
        <fullName evidence="5">TIR domain-containing protein in A.baumannii</fullName>
        <shortName evidence="5">AbTIR</shortName>
    </alternativeName>
</protein>
<evidence type="ECO:0000255" key="1"/>
<evidence type="ECO:0000255" key="2">
    <source>
        <dbReference type="PROSITE-ProRule" id="PRU00204"/>
    </source>
</evidence>
<evidence type="ECO:0000269" key="3">
    <source>
    </source>
</evidence>
<evidence type="ECO:0000269" key="4">
    <source>
    </source>
</evidence>
<evidence type="ECO:0000303" key="5">
    <source>
    </source>
</evidence>
<evidence type="ECO:0000305" key="6"/>
<evidence type="ECO:0000305" key="7">
    <source>
    </source>
</evidence>
<evidence type="ECO:0000312" key="8">
    <source>
        <dbReference type="EMBL" id="EXB04249.1"/>
    </source>
</evidence>
<evidence type="ECO:0000312" key="9">
    <source>
        <dbReference type="PDB" id="7UWG"/>
    </source>
</evidence>
<evidence type="ECO:0000312" key="10">
    <source>
        <dbReference type="PDB" id="7UXU"/>
    </source>
</evidence>
<evidence type="ECO:0007744" key="11">
    <source>
        <dbReference type="PDB" id="7UXU"/>
    </source>
</evidence>
<evidence type="ECO:0007829" key="12">
    <source>
        <dbReference type="PDB" id="7UWG"/>
    </source>
</evidence>
<evidence type="ECO:0007829" key="13">
    <source>
        <dbReference type="PDB" id="7UXU"/>
    </source>
</evidence>
<organism>
    <name type="scientific">Acinetobacter baumannii (strain 1295743)</name>
    <dbReference type="NCBI Taxonomy" id="1310613"/>
    <lineage>
        <taxon>Bacteria</taxon>
        <taxon>Pseudomonadati</taxon>
        <taxon>Pseudomonadota</taxon>
        <taxon>Gammaproteobacteria</taxon>
        <taxon>Moraxellales</taxon>
        <taxon>Moraxellaceae</taxon>
        <taxon>Acinetobacter</taxon>
        <taxon>Acinetobacter calcoaceticus/baumannii complex</taxon>
    </lineage>
</organism>